<dbReference type="SMR" id="P0DPX4"/>
<dbReference type="GO" id="GO:0005576">
    <property type="term" value="C:extracellular region"/>
    <property type="evidence" value="ECO:0007669"/>
    <property type="project" value="UniProtKB-SubCell"/>
</dbReference>
<dbReference type="GO" id="GO:0090729">
    <property type="term" value="F:toxin activity"/>
    <property type="evidence" value="ECO:0007669"/>
    <property type="project" value="UniProtKB-KW"/>
</dbReference>
<evidence type="ECO:0000255" key="1"/>
<evidence type="ECO:0000303" key="2">
    <source>
    </source>
</evidence>
<evidence type="ECO:0000305" key="3"/>
<evidence type="ECO:0000305" key="4">
    <source>
    </source>
</evidence>
<proteinExistence type="inferred from homology"/>
<protein>
    <recommendedName>
        <fullName evidence="2">U-scoloptoxin(04)-Er3a</fullName>
        <shortName evidence="2">U-SLPTX(04)-Er3a</shortName>
    </recommendedName>
</protein>
<organism>
    <name type="scientific">Ethmostigmus rubripes</name>
    <name type="common">Giant centipede</name>
    <dbReference type="NCBI Taxonomy" id="62613"/>
    <lineage>
        <taxon>Eukaryota</taxon>
        <taxon>Metazoa</taxon>
        <taxon>Ecdysozoa</taxon>
        <taxon>Arthropoda</taxon>
        <taxon>Myriapoda</taxon>
        <taxon>Chilopoda</taxon>
        <taxon>Pleurostigmophora</taxon>
        <taxon>Scolopendromorpha</taxon>
        <taxon>Scolopendridae</taxon>
        <taxon>Ethmostigmus</taxon>
    </lineage>
</organism>
<accession>P0DPX4</accession>
<keyword id="KW-1015">Disulfide bond</keyword>
<keyword id="KW-0964">Secreted</keyword>
<keyword id="KW-0732">Signal</keyword>
<keyword id="KW-0800">Toxin</keyword>
<feature type="signal peptide" evidence="1">
    <location>
        <begin position="1"/>
        <end position="24"/>
    </location>
</feature>
<feature type="chain" id="PRO_0000446717" description="U-scoloptoxin(04)-Er3a" evidence="3">
    <location>
        <begin position="25"/>
        <end position="70"/>
    </location>
</feature>
<reference key="1">
    <citation type="journal article" date="2014" name="Mol. Biol. Evol.">
        <title>Clawing through evolution: toxin diversification and convergence in the ancient lineage Chilopoda (centipedes).</title>
        <authorList>
            <person name="Undheim E.A."/>
            <person name="Jones A."/>
            <person name="Clauser K.R."/>
            <person name="Holland J.W."/>
            <person name="Pineda S.S."/>
            <person name="King G.F."/>
            <person name="Fry B.G."/>
        </authorList>
    </citation>
    <scope>NUCLEOTIDE SEQUENCE [MRNA]</scope>
    <scope>NOMENCLATURE</scope>
    <source>
        <tissue>Venom gland</tissue>
    </source>
</reference>
<name>TX43A_ETHRU</name>
<sequence>MAAIRNLLILTMLLIVCVSWNADAAPGAAPSIALDKRANENFSLREQEQPICEHCWKQPPPRRCPKFCLE</sequence>
<comment type="subcellular location">
    <subcellularLocation>
        <location evidence="4">Secreted</location>
    </subcellularLocation>
</comment>
<comment type="tissue specificity">
    <text evidence="4">Expressed by the venom gland.</text>
</comment>
<comment type="PTM">
    <text evidence="3">Contains 2 disulfide bonds.</text>
</comment>
<comment type="similarity">
    <text evidence="3">Belongs to the scoloptoxin-04 family.</text>
</comment>
<comment type="caution">
    <text evidence="4">All E.rubripes family members described in 'Undeheim et al., 2014' have not been imported into UniProtKB. Please, refer to this paper to access them.</text>
</comment>
<comment type="online information" name="National Center for Biotechnology Information (NCBI)">
    <link uri="https://www.ncbi.nlm.nih.gov/nuccore/GASI01000187"/>
</comment>